<reference key="1">
    <citation type="journal article" date="2007" name="Science">
        <title>Legumes symbioses: absence of nod genes in photosynthetic bradyrhizobia.</title>
        <authorList>
            <person name="Giraud E."/>
            <person name="Moulin L."/>
            <person name="Vallenet D."/>
            <person name="Barbe V."/>
            <person name="Cytryn E."/>
            <person name="Avarre J.-C."/>
            <person name="Jaubert M."/>
            <person name="Simon D."/>
            <person name="Cartieaux F."/>
            <person name="Prin Y."/>
            <person name="Bena G."/>
            <person name="Hannibal L."/>
            <person name="Fardoux J."/>
            <person name="Kojadinovic M."/>
            <person name="Vuillet L."/>
            <person name="Lajus A."/>
            <person name="Cruveiller S."/>
            <person name="Rouy Z."/>
            <person name="Mangenot S."/>
            <person name="Segurens B."/>
            <person name="Dossat C."/>
            <person name="Franck W.L."/>
            <person name="Chang W.-S."/>
            <person name="Saunders E."/>
            <person name="Bruce D."/>
            <person name="Richardson P."/>
            <person name="Normand P."/>
            <person name="Dreyfus B."/>
            <person name="Pignol D."/>
            <person name="Stacey G."/>
            <person name="Emerich D."/>
            <person name="Vermeglio A."/>
            <person name="Medigue C."/>
            <person name="Sadowsky M."/>
        </authorList>
    </citation>
    <scope>NUCLEOTIDE SEQUENCE [LARGE SCALE GENOMIC DNA]</scope>
    <source>
        <strain>ORS 278</strain>
    </source>
</reference>
<accession>A4YUQ7</accession>
<sequence length="393" mass="41489">MTTSQRTAAILVAAGRGLRAGAGGPKQYRTIGGRTVIHRALAAFAEHPEVAVVQPVVNPDDIDVFNAAVAGLRHEAPARGGATRQASVLAGLEALVPHKPEIVLIHDAARPFVTPAVISRAIIAANKTGAAIPVAPVTDTIKEVGASGDITATPERAKLRIAQTPQTFRFDTILEAHRRAAREGLTEFTDDAAIAEWAGLTVATFEGDVANMKLTTPEDFVREEARLAASLGDIRTGTGYDVHAFGEGDHVWLCGLRVPHTKGFLAHSDGDVGLHALVDAILGALADGDIGSHFPPSDMKWKGASSDQFLKYAIERVAARGGRVANLEVTMICERPKIGPLRDQMRARIAEISGVDISRIAVKATTSERLGFTGREEGIAATASATIRLPWGA</sequence>
<comment type="function">
    <text evidence="1">Bifunctional enzyme that catalyzes the formation of 4-diphosphocytidyl-2-C-methyl-D-erythritol from CTP and 2-C-methyl-D-erythritol 4-phosphate (MEP) (IspD), and catalyzes the conversion of 4-diphosphocytidyl-2-C-methyl-D-erythritol 2-phosphate (CDP-ME2P) to 2-C-methyl-D-erythritol 2,4-cyclodiphosphate (ME-CPP) with a corresponding release of cytidine 5-monophosphate (CMP) (IspF).</text>
</comment>
<comment type="catalytic activity">
    <reaction evidence="1">
        <text>2-C-methyl-D-erythritol 4-phosphate + CTP + H(+) = 4-CDP-2-C-methyl-D-erythritol + diphosphate</text>
        <dbReference type="Rhea" id="RHEA:13429"/>
        <dbReference type="ChEBI" id="CHEBI:15378"/>
        <dbReference type="ChEBI" id="CHEBI:33019"/>
        <dbReference type="ChEBI" id="CHEBI:37563"/>
        <dbReference type="ChEBI" id="CHEBI:57823"/>
        <dbReference type="ChEBI" id="CHEBI:58262"/>
        <dbReference type="EC" id="2.7.7.60"/>
    </reaction>
</comment>
<comment type="catalytic activity">
    <reaction evidence="1">
        <text>4-CDP-2-C-methyl-D-erythritol 2-phosphate = 2-C-methyl-D-erythritol 2,4-cyclic diphosphate + CMP</text>
        <dbReference type="Rhea" id="RHEA:23864"/>
        <dbReference type="ChEBI" id="CHEBI:57919"/>
        <dbReference type="ChEBI" id="CHEBI:58483"/>
        <dbReference type="ChEBI" id="CHEBI:60377"/>
        <dbReference type="EC" id="4.6.1.12"/>
    </reaction>
</comment>
<comment type="cofactor">
    <cofactor evidence="1">
        <name>a divalent metal cation</name>
        <dbReference type="ChEBI" id="CHEBI:60240"/>
    </cofactor>
</comment>
<comment type="pathway">
    <text evidence="1">Isoprenoid biosynthesis; isopentenyl diphosphate biosynthesis via DXP pathway; isopentenyl diphosphate from 1-deoxy-D-xylulose 5-phosphate: step 2/6.</text>
</comment>
<comment type="pathway">
    <text evidence="1">Isoprenoid biosynthesis; isopentenyl diphosphate biosynthesis via DXP pathway; isopentenyl diphosphate from 1-deoxy-D-xylulose 5-phosphate: step 4/6.</text>
</comment>
<comment type="similarity">
    <text evidence="1">In the N-terminal section; belongs to the IspD/TarI cytidylyltransferase family. IspD subfamily.</text>
</comment>
<comment type="similarity">
    <text evidence="1">In the C-terminal section; belongs to the IspF family.</text>
</comment>
<protein>
    <recommendedName>
        <fullName evidence="1">Bifunctional enzyme IspD/IspF</fullName>
    </recommendedName>
    <domain>
        <recommendedName>
            <fullName evidence="1">2-C-methyl-D-erythritol 4-phosphate cytidylyltransferase</fullName>
            <ecNumber evidence="1">2.7.7.60</ecNumber>
        </recommendedName>
        <alternativeName>
            <fullName evidence="1">4-diphosphocytidyl-2C-methyl-D-erythritol synthase</fullName>
        </alternativeName>
        <alternativeName>
            <fullName evidence="1">MEP cytidylyltransferase</fullName>
            <shortName evidence="1">MCT</shortName>
        </alternativeName>
    </domain>
    <domain>
        <recommendedName>
            <fullName evidence="1">2-C-methyl-D-erythritol 2,4-cyclodiphosphate synthase</fullName>
            <shortName evidence="1">MECDP-synthase</shortName>
            <shortName evidence="1">MECPP-synthase</shortName>
            <shortName evidence="1">MECPS</shortName>
            <ecNumber evidence="1">4.6.1.12</ecNumber>
        </recommendedName>
    </domain>
</protein>
<gene>
    <name evidence="1" type="primary">ispDF</name>
    <name type="ordered locus">BRADO3869</name>
</gene>
<dbReference type="EC" id="2.7.7.60" evidence="1"/>
<dbReference type="EC" id="4.6.1.12" evidence="1"/>
<dbReference type="EMBL" id="CU234118">
    <property type="protein sequence ID" value="CAL77633.1"/>
    <property type="molecule type" value="Genomic_DNA"/>
</dbReference>
<dbReference type="RefSeq" id="WP_011926769.1">
    <property type="nucleotide sequence ID" value="NC_009445.1"/>
</dbReference>
<dbReference type="SMR" id="A4YUQ7"/>
<dbReference type="STRING" id="114615.BRADO3869"/>
<dbReference type="KEGG" id="bra:BRADO3869"/>
<dbReference type="eggNOG" id="COG0245">
    <property type="taxonomic scope" value="Bacteria"/>
</dbReference>
<dbReference type="eggNOG" id="COG1211">
    <property type="taxonomic scope" value="Bacteria"/>
</dbReference>
<dbReference type="HOGENOM" id="CLU_042800_2_3_5"/>
<dbReference type="OrthoDB" id="9804336at2"/>
<dbReference type="UniPathway" id="UPA00056">
    <property type="reaction ID" value="UER00093"/>
</dbReference>
<dbReference type="UniPathway" id="UPA00056">
    <property type="reaction ID" value="UER00095"/>
</dbReference>
<dbReference type="Proteomes" id="UP000001994">
    <property type="component" value="Chromosome"/>
</dbReference>
<dbReference type="GO" id="GO:0008685">
    <property type="term" value="F:2-C-methyl-D-erythritol 2,4-cyclodiphosphate synthase activity"/>
    <property type="evidence" value="ECO:0007669"/>
    <property type="project" value="UniProtKB-UniRule"/>
</dbReference>
<dbReference type="GO" id="GO:0050518">
    <property type="term" value="F:2-C-methyl-D-erythritol 4-phosphate cytidylyltransferase activity"/>
    <property type="evidence" value="ECO:0007669"/>
    <property type="project" value="UniProtKB-UniRule"/>
</dbReference>
<dbReference type="GO" id="GO:0046872">
    <property type="term" value="F:metal ion binding"/>
    <property type="evidence" value="ECO:0007669"/>
    <property type="project" value="UniProtKB-KW"/>
</dbReference>
<dbReference type="GO" id="GO:0019288">
    <property type="term" value="P:isopentenyl diphosphate biosynthetic process, methylerythritol 4-phosphate pathway"/>
    <property type="evidence" value="ECO:0007669"/>
    <property type="project" value="UniProtKB-UniRule"/>
</dbReference>
<dbReference type="GO" id="GO:0016114">
    <property type="term" value="P:terpenoid biosynthetic process"/>
    <property type="evidence" value="ECO:0007669"/>
    <property type="project" value="InterPro"/>
</dbReference>
<dbReference type="CDD" id="cd02516">
    <property type="entry name" value="CDP-ME_synthetase"/>
    <property type="match status" value="1"/>
</dbReference>
<dbReference type="CDD" id="cd00554">
    <property type="entry name" value="MECDP_synthase"/>
    <property type="match status" value="1"/>
</dbReference>
<dbReference type="FunFam" id="3.90.550.10:FF:000003">
    <property type="entry name" value="2-C-methyl-D-erythritol 4-phosphate cytidylyltransferase"/>
    <property type="match status" value="1"/>
</dbReference>
<dbReference type="Gene3D" id="3.30.1330.50">
    <property type="entry name" value="2-C-methyl-D-erythritol 2,4-cyclodiphosphate synthase"/>
    <property type="match status" value="1"/>
</dbReference>
<dbReference type="Gene3D" id="3.90.550.10">
    <property type="entry name" value="Spore Coat Polysaccharide Biosynthesis Protein SpsA, Chain A"/>
    <property type="match status" value="1"/>
</dbReference>
<dbReference type="HAMAP" id="MF_00108">
    <property type="entry name" value="IspD"/>
    <property type="match status" value="1"/>
</dbReference>
<dbReference type="HAMAP" id="MF_01520">
    <property type="entry name" value="IspDF"/>
    <property type="match status" value="1"/>
</dbReference>
<dbReference type="HAMAP" id="MF_00107">
    <property type="entry name" value="IspF"/>
    <property type="match status" value="1"/>
</dbReference>
<dbReference type="InterPro" id="IPR001228">
    <property type="entry name" value="IspD"/>
</dbReference>
<dbReference type="InterPro" id="IPR026596">
    <property type="entry name" value="IspD/F"/>
</dbReference>
<dbReference type="InterPro" id="IPR034683">
    <property type="entry name" value="IspD/TarI"/>
</dbReference>
<dbReference type="InterPro" id="IPR018294">
    <property type="entry name" value="ISPD_synthase_CS"/>
</dbReference>
<dbReference type="InterPro" id="IPR003526">
    <property type="entry name" value="MECDP_synthase"/>
</dbReference>
<dbReference type="InterPro" id="IPR020555">
    <property type="entry name" value="MECDP_synthase_CS"/>
</dbReference>
<dbReference type="InterPro" id="IPR036571">
    <property type="entry name" value="MECDP_synthase_sf"/>
</dbReference>
<dbReference type="InterPro" id="IPR029044">
    <property type="entry name" value="Nucleotide-diphossugar_trans"/>
</dbReference>
<dbReference type="NCBIfam" id="TIGR00453">
    <property type="entry name" value="ispD"/>
    <property type="match status" value="1"/>
</dbReference>
<dbReference type="NCBIfam" id="TIGR00151">
    <property type="entry name" value="ispF"/>
    <property type="match status" value="1"/>
</dbReference>
<dbReference type="NCBIfam" id="NF006899">
    <property type="entry name" value="PRK09382.1"/>
    <property type="match status" value="1"/>
</dbReference>
<dbReference type="PANTHER" id="PTHR43181">
    <property type="entry name" value="2-C-METHYL-D-ERYTHRITOL 2,4-CYCLODIPHOSPHATE SYNTHASE, CHLOROPLASTIC"/>
    <property type="match status" value="1"/>
</dbReference>
<dbReference type="PANTHER" id="PTHR43181:SF1">
    <property type="entry name" value="2-C-METHYL-D-ERYTHRITOL 2,4-CYCLODIPHOSPHATE SYNTHASE, CHLOROPLASTIC"/>
    <property type="match status" value="1"/>
</dbReference>
<dbReference type="Pfam" id="PF01128">
    <property type="entry name" value="IspD"/>
    <property type="match status" value="1"/>
</dbReference>
<dbReference type="Pfam" id="PF02542">
    <property type="entry name" value="YgbB"/>
    <property type="match status" value="1"/>
</dbReference>
<dbReference type="SUPFAM" id="SSF69765">
    <property type="entry name" value="IpsF-like"/>
    <property type="match status" value="1"/>
</dbReference>
<dbReference type="SUPFAM" id="SSF53448">
    <property type="entry name" value="Nucleotide-diphospho-sugar transferases"/>
    <property type="match status" value="1"/>
</dbReference>
<dbReference type="PROSITE" id="PS01295">
    <property type="entry name" value="ISPD"/>
    <property type="match status" value="1"/>
</dbReference>
<dbReference type="PROSITE" id="PS01350">
    <property type="entry name" value="ISPF"/>
    <property type="match status" value="1"/>
</dbReference>
<keyword id="KW-0414">Isoprene biosynthesis</keyword>
<keyword id="KW-0456">Lyase</keyword>
<keyword id="KW-0479">Metal-binding</keyword>
<keyword id="KW-0511">Multifunctional enzyme</keyword>
<keyword id="KW-0548">Nucleotidyltransferase</keyword>
<keyword id="KW-1185">Reference proteome</keyword>
<keyword id="KW-0808">Transferase</keyword>
<feature type="chain" id="PRO_0000296740" description="Bifunctional enzyme IspD/IspF">
    <location>
        <begin position="1"/>
        <end position="393"/>
    </location>
</feature>
<feature type="region of interest" description="2-C-methyl-D-erythritol 4-phosphate cytidylyltransferase" evidence="1">
    <location>
        <begin position="1"/>
        <end position="234"/>
    </location>
</feature>
<feature type="region of interest" description="2-C-methyl-D-erythritol 2,4-cyclodiphosphate synthase" evidence="1">
    <location>
        <begin position="235"/>
        <end position="393"/>
    </location>
</feature>
<feature type="binding site" evidence="1">
    <location>
        <begin position="241"/>
        <end position="243"/>
    </location>
    <ligand>
        <name>4-CDP-2-C-methyl-D-erythritol 2-phosphate</name>
        <dbReference type="ChEBI" id="CHEBI:57919"/>
    </ligand>
</feature>
<feature type="binding site" evidence="1">
    <location>
        <position position="241"/>
    </location>
    <ligand>
        <name>a divalent metal cation</name>
        <dbReference type="ChEBI" id="CHEBI:60240"/>
    </ligand>
</feature>
<feature type="binding site" evidence="1">
    <location>
        <position position="243"/>
    </location>
    <ligand>
        <name>a divalent metal cation</name>
        <dbReference type="ChEBI" id="CHEBI:60240"/>
    </ligand>
</feature>
<feature type="binding site" evidence="1">
    <location>
        <begin position="267"/>
        <end position="268"/>
    </location>
    <ligand>
        <name>4-CDP-2-C-methyl-D-erythritol 2-phosphate</name>
        <dbReference type="ChEBI" id="CHEBI:57919"/>
    </ligand>
</feature>
<feature type="binding site" evidence="1">
    <location>
        <position position="275"/>
    </location>
    <ligand>
        <name>a divalent metal cation</name>
        <dbReference type="ChEBI" id="CHEBI:60240"/>
    </ligand>
</feature>
<feature type="binding site" evidence="1">
    <location>
        <begin position="289"/>
        <end position="291"/>
    </location>
    <ligand>
        <name>4-CDP-2-C-methyl-D-erythritol 2-phosphate</name>
        <dbReference type="ChEBI" id="CHEBI:57919"/>
    </ligand>
</feature>
<feature type="binding site" evidence="1">
    <location>
        <begin position="365"/>
        <end position="368"/>
    </location>
    <ligand>
        <name>4-CDP-2-C-methyl-D-erythritol 2-phosphate</name>
        <dbReference type="ChEBI" id="CHEBI:57919"/>
    </ligand>
</feature>
<feature type="binding site" evidence="1">
    <location>
        <position position="372"/>
    </location>
    <ligand>
        <name>4-CDP-2-C-methyl-D-erythritol 2-phosphate</name>
        <dbReference type="ChEBI" id="CHEBI:57919"/>
    </ligand>
</feature>
<feature type="binding site" evidence="1">
    <location>
        <position position="375"/>
    </location>
    <ligand>
        <name>4-CDP-2-C-methyl-D-erythritol 2-phosphate</name>
        <dbReference type="ChEBI" id="CHEBI:57919"/>
    </ligand>
</feature>
<feature type="site" description="Transition state stabilizer" evidence="1">
    <location>
        <position position="19"/>
    </location>
</feature>
<feature type="site" description="Transition state stabilizer" evidence="1">
    <location>
        <position position="26"/>
    </location>
</feature>
<feature type="site" description="Positions MEP for the nucleophilic attack" evidence="1">
    <location>
        <position position="156"/>
    </location>
</feature>
<feature type="site" description="Positions MEP for the nucleophilic attack" evidence="1">
    <location>
        <position position="213"/>
    </location>
</feature>
<feature type="site" description="Transition state stabilizer" evidence="1">
    <location>
        <position position="267"/>
    </location>
</feature>
<feature type="site" description="Transition state stabilizer" evidence="1">
    <location>
        <position position="366"/>
    </location>
</feature>
<proteinExistence type="inferred from homology"/>
<evidence type="ECO:0000255" key="1">
    <source>
        <dbReference type="HAMAP-Rule" id="MF_01520"/>
    </source>
</evidence>
<name>ISPDF_BRASO</name>
<organism>
    <name type="scientific">Bradyrhizobium sp. (strain ORS 278)</name>
    <dbReference type="NCBI Taxonomy" id="114615"/>
    <lineage>
        <taxon>Bacteria</taxon>
        <taxon>Pseudomonadati</taxon>
        <taxon>Pseudomonadota</taxon>
        <taxon>Alphaproteobacteria</taxon>
        <taxon>Hyphomicrobiales</taxon>
        <taxon>Nitrobacteraceae</taxon>
        <taxon>Bradyrhizobium</taxon>
    </lineage>
</organism>